<sequence length="1356" mass="145336">MGSEAAAAARAVVVAVNGERYEAVGVDPSTTLLEFLRTRTPVRGPKLGCGEGGCGACVVVVSKYDAVADEVTEFSASSCLTLLGSLHHCAVTTSEGIGNSRDGFHAVQRRLSGFHASQCGFCTPGMCMSIYSALAKADKASGRPAPPTGFSKITAAEAEKAVSGNLCRCTGYRPIVDACKSFAADVDLEDLGLNAFWKKGVDDEHADINKLPAYSGGAAVCTFPEFLKSEIRSSMGQANGDTSAVVVTGDGWFHPKSVEEFHRLFDSNLFDERSVKIVASNTGSGVYKDQDLHDKYINISQIPELSAINRSSKGVEIGAVVSISQAIDILSDGGAVFRKIADHLSKVASPFVRNTATIGGNIIMAQRLSFSSDIATVLLAAGSTVTIQVAAKRMCITLEEFLKQPPCDSRTLLVSISIPDWGSDDGITFQTFRAAPRPLGNAVSYVNSAFLARSSVDGSSGSHLIEDVCLAFGPFGAKHAIRAREVEKFLKGKLVSAPVILEAVRLLKGVVSPAEGTTHPEYRVSLAVSYLFKFLSSLTNGLDEPENANVPNGSFTNGTANGIVDSSPEKHSNVDSSYLPIKSRQEMVFSDEYRPIGKPIEKTGAELQASGEAVYVDDISAPKDCLYGAFIYSTHPHAHIKGVNFRSSLASQKVITVITLKDIPTNGKNIGSCSPMLGDEALFVDPVSEFAGQNIGVVIAETQKYAYMAAKQSVIEYSTENLQPPILTVEDAVQHNSYFQVPPFLAPTPIGEFNQAMSEADHKIIDGEVKLESQYYFYMETQTALAIPDEDNCITLYVSAQLPEITQNTVARCLGIPYHNVRIITRRVGGGFGGKAMKAIHVATACAVAAFKLRRPVRMYLDRKTDMIMAGGRHPMKVKYSVGFKSDGKITGLHVDLRINCGISPDCSPALPVAIVGALKKYNWGALSFDIKLCKTNVSSKSAMRAPGDAQGSFIAEAIVEHIASTLSVDTNAIRRKNLHDFESLKVFYGNSAGDPSTYSLVTIFDKLASSPEYQQRAAVVEHFNAGSRWKKRGISCVPITYDVRLRPSPGKVSIMNDGSIAVEVGGVEIGQGLWTKVKQMTAFALGQLCDDGGEGLLDKVRVIQADTLSMIQGGFTGGSTTSETSCEAVRKSCAALVERLKPIKEKAGTLPWKSLIAQASMASVKLTEHAYWTPDPTFTSYLNYGAAISEVEVDVLTGETTILRSDLVYDCGQSLNPAVDLGQVEGAFVQGIGFFTNEEYTTNSDGLVINDGTWTYKIPTVDTIPKQFNVELINSARDHKRVLSSKASGEPPLLLASSVHCAMREAIRAARKEFAGAGGSSLTFQMDVPATMPIVKELCGLDVVERDLESFAAKA</sequence>
<protein>
    <recommendedName>
        <fullName>Probable aldehyde oxidase 3</fullName>
        <shortName>AO-3</shortName>
        <ecNumber>1.2.3.1</ecNumber>
    </recommendedName>
</protein>
<keyword id="KW-0001">2Fe-2S</keyword>
<keyword id="KW-0937">Abscisic acid biosynthesis</keyword>
<keyword id="KW-0073">Auxin biosynthesis</keyword>
<keyword id="KW-0274">FAD</keyword>
<keyword id="KW-0285">Flavoprotein</keyword>
<keyword id="KW-0408">Iron</keyword>
<keyword id="KW-0411">Iron-sulfur</keyword>
<keyword id="KW-0479">Metal-binding</keyword>
<keyword id="KW-0500">Molybdenum</keyword>
<keyword id="KW-0520">NAD</keyword>
<keyword id="KW-0560">Oxidoreductase</keyword>
<keyword id="KW-1185">Reference proteome</keyword>
<gene>
    <name type="ordered locus">Os03g0790700</name>
    <name type="ordered locus">LOC_Os03g57680</name>
    <name type="ORF">OSJNBa0087O09.19</name>
</gene>
<reference key="1">
    <citation type="journal article" date="2005" name="Genome Res.">
        <title>Sequence, annotation, and analysis of synteny between rice chromosome 3 and diverged grass species.</title>
        <authorList>
            <consortium name="The rice chromosome 3 sequencing consortium"/>
            <person name="Buell C.R."/>
            <person name="Yuan Q."/>
            <person name="Ouyang S."/>
            <person name="Liu J."/>
            <person name="Zhu W."/>
            <person name="Wang A."/>
            <person name="Maiti R."/>
            <person name="Haas B."/>
            <person name="Wortman J."/>
            <person name="Pertea M."/>
            <person name="Jones K.M."/>
            <person name="Kim M."/>
            <person name="Overton L."/>
            <person name="Tsitrin T."/>
            <person name="Fadrosh D."/>
            <person name="Bera J."/>
            <person name="Weaver B."/>
            <person name="Jin S."/>
            <person name="Johri S."/>
            <person name="Reardon M."/>
            <person name="Webb K."/>
            <person name="Hill J."/>
            <person name="Moffat K."/>
            <person name="Tallon L."/>
            <person name="Van Aken S."/>
            <person name="Lewis M."/>
            <person name="Utterback T."/>
            <person name="Feldblyum T."/>
            <person name="Zismann V."/>
            <person name="Iobst S."/>
            <person name="Hsiao J."/>
            <person name="de Vazeille A.R."/>
            <person name="Salzberg S.L."/>
            <person name="White O."/>
            <person name="Fraser C.M."/>
            <person name="Yu Y."/>
            <person name="Kim H."/>
            <person name="Rambo T."/>
            <person name="Currie J."/>
            <person name="Collura K."/>
            <person name="Kernodle-Thompson S."/>
            <person name="Wei F."/>
            <person name="Kudrna K."/>
            <person name="Ammiraju J.S.S."/>
            <person name="Luo M."/>
            <person name="Goicoechea J.L."/>
            <person name="Wing R.A."/>
            <person name="Henry D."/>
            <person name="Oates R."/>
            <person name="Palmer M."/>
            <person name="Pries G."/>
            <person name="Saski C."/>
            <person name="Simmons J."/>
            <person name="Soderlund C."/>
            <person name="Nelson W."/>
            <person name="de la Bastide M."/>
            <person name="Spiegel L."/>
            <person name="Nascimento L."/>
            <person name="Huang E."/>
            <person name="Preston R."/>
            <person name="Zutavern T."/>
            <person name="Palmer L."/>
            <person name="O'Shaughnessy A."/>
            <person name="Dike S."/>
            <person name="McCombie W.R."/>
            <person name="Minx P."/>
            <person name="Cordum H."/>
            <person name="Wilson R."/>
            <person name="Jin W."/>
            <person name="Lee H.R."/>
            <person name="Jiang J."/>
            <person name="Jackson S."/>
        </authorList>
    </citation>
    <scope>NUCLEOTIDE SEQUENCE [LARGE SCALE GENOMIC DNA]</scope>
    <source>
        <strain>cv. Nipponbare</strain>
    </source>
</reference>
<reference key="2">
    <citation type="journal article" date="2005" name="Nature">
        <title>The map-based sequence of the rice genome.</title>
        <authorList>
            <consortium name="International rice genome sequencing project (IRGSP)"/>
        </authorList>
    </citation>
    <scope>NUCLEOTIDE SEQUENCE [LARGE SCALE GENOMIC DNA]</scope>
    <source>
        <strain>cv. Nipponbare</strain>
    </source>
</reference>
<reference key="3">
    <citation type="journal article" date="2013" name="Rice">
        <title>Improvement of the Oryza sativa Nipponbare reference genome using next generation sequence and optical map data.</title>
        <authorList>
            <person name="Kawahara Y."/>
            <person name="de la Bastide M."/>
            <person name="Hamilton J.P."/>
            <person name="Kanamori H."/>
            <person name="McCombie W.R."/>
            <person name="Ouyang S."/>
            <person name="Schwartz D.C."/>
            <person name="Tanaka T."/>
            <person name="Wu J."/>
            <person name="Zhou S."/>
            <person name="Childs K.L."/>
            <person name="Davidson R.M."/>
            <person name="Lin H."/>
            <person name="Quesada-Ocampo L."/>
            <person name="Vaillancourt B."/>
            <person name="Sakai H."/>
            <person name="Lee S.S."/>
            <person name="Kim J."/>
            <person name="Numa H."/>
            <person name="Itoh T."/>
            <person name="Buell C.R."/>
            <person name="Matsumoto T."/>
        </authorList>
    </citation>
    <scope>GENOME REANNOTATION</scope>
    <source>
        <strain>cv. Nipponbare</strain>
    </source>
</reference>
<reference key="4">
    <citation type="submission" date="2006-10" db="EMBL/GenBank/DDBJ databases">
        <title>Oryza sativa full length cDNA.</title>
        <authorList>
            <consortium name="The rice full-length cDNA consortium"/>
        </authorList>
    </citation>
    <scope>NUCLEOTIDE SEQUENCE [LARGE SCALE MRNA]</scope>
    <source>
        <strain>cv. Nipponbare</strain>
    </source>
</reference>
<feature type="chain" id="PRO_0000247647" description="Probable aldehyde oxidase 3">
    <location>
        <begin position="1"/>
        <end position="1356"/>
    </location>
</feature>
<feature type="domain" description="2Fe-2S ferredoxin-type" evidence="2">
    <location>
        <begin position="10"/>
        <end position="97"/>
    </location>
</feature>
<feature type="domain" description="FAD-binding PCMH-type" evidence="3">
    <location>
        <begin position="245"/>
        <end position="437"/>
    </location>
</feature>
<feature type="region of interest" description="Disordered" evidence="4">
    <location>
        <begin position="552"/>
        <end position="576"/>
    </location>
</feature>
<feature type="binding site" evidence="2">
    <location>
        <position position="49"/>
    </location>
    <ligand>
        <name>[2Fe-2S] cluster</name>
        <dbReference type="ChEBI" id="CHEBI:190135"/>
    </ligand>
</feature>
<feature type="binding site" evidence="2">
    <location>
        <position position="54"/>
    </location>
    <ligand>
        <name>[2Fe-2S] cluster</name>
        <dbReference type="ChEBI" id="CHEBI:190135"/>
    </ligand>
</feature>
<feature type="binding site" evidence="2">
    <location>
        <position position="57"/>
    </location>
    <ligand>
        <name>[2Fe-2S] cluster</name>
        <dbReference type="ChEBI" id="CHEBI:190135"/>
    </ligand>
</feature>
<feature type="binding site" evidence="2">
    <location>
        <position position="79"/>
    </location>
    <ligand>
        <name>[2Fe-2S] cluster</name>
        <dbReference type="ChEBI" id="CHEBI:190135"/>
    </ligand>
</feature>
<name>ALDO3_ORYSJ</name>
<proteinExistence type="evidence at transcript level"/>
<evidence type="ECO:0000250" key="1"/>
<evidence type="ECO:0000255" key="2">
    <source>
        <dbReference type="PROSITE-ProRule" id="PRU00465"/>
    </source>
</evidence>
<evidence type="ECO:0000255" key="3">
    <source>
        <dbReference type="PROSITE-ProRule" id="PRU00718"/>
    </source>
</evidence>
<evidence type="ECO:0000256" key="4">
    <source>
        <dbReference type="SAM" id="MobiDB-lite"/>
    </source>
</evidence>
<evidence type="ECO:0000305" key="5"/>
<organism>
    <name type="scientific">Oryza sativa subsp. japonica</name>
    <name type="common">Rice</name>
    <dbReference type="NCBI Taxonomy" id="39947"/>
    <lineage>
        <taxon>Eukaryota</taxon>
        <taxon>Viridiplantae</taxon>
        <taxon>Streptophyta</taxon>
        <taxon>Embryophyta</taxon>
        <taxon>Tracheophyta</taxon>
        <taxon>Spermatophyta</taxon>
        <taxon>Magnoliopsida</taxon>
        <taxon>Liliopsida</taxon>
        <taxon>Poales</taxon>
        <taxon>Poaceae</taxon>
        <taxon>BOP clade</taxon>
        <taxon>Oryzoideae</taxon>
        <taxon>Oryzeae</taxon>
        <taxon>Oryzinae</taxon>
        <taxon>Oryza</taxon>
        <taxon>Oryza sativa</taxon>
    </lineage>
</organism>
<accession>Q852M2</accession>
<accession>Q10C91</accession>
<dbReference type="EC" id="1.2.3.1"/>
<dbReference type="EMBL" id="AC087096">
    <property type="protein sequence ID" value="AAO24918.1"/>
    <property type="molecule type" value="Genomic_DNA"/>
</dbReference>
<dbReference type="EMBL" id="DP000009">
    <property type="protein sequence ID" value="ABF99281.1"/>
    <property type="molecule type" value="Genomic_DNA"/>
</dbReference>
<dbReference type="EMBL" id="AP014959">
    <property type="protein sequence ID" value="BAS86776.1"/>
    <property type="molecule type" value="Genomic_DNA"/>
</dbReference>
<dbReference type="EMBL" id="AK242113">
    <property type="protein sequence ID" value="BAH01196.1"/>
    <property type="molecule type" value="mRNA"/>
</dbReference>
<dbReference type="RefSeq" id="XP_015630438.1">
    <property type="nucleotide sequence ID" value="XM_015774952.1"/>
</dbReference>
<dbReference type="SMR" id="Q852M2"/>
<dbReference type="FunCoup" id="Q852M2">
    <property type="interactions" value="6"/>
</dbReference>
<dbReference type="STRING" id="39947.Q852M2"/>
<dbReference type="PaxDb" id="39947-Q852M2"/>
<dbReference type="EnsemblPlants" id="Os03t0790700-01">
    <property type="protein sequence ID" value="Os03t0790700-01"/>
    <property type="gene ID" value="Os03g0790700"/>
</dbReference>
<dbReference type="Gramene" id="Os03t0790700-01">
    <property type="protein sequence ID" value="Os03t0790700-01"/>
    <property type="gene ID" value="Os03g0790700"/>
</dbReference>
<dbReference type="eggNOG" id="KOG0430">
    <property type="taxonomic scope" value="Eukaryota"/>
</dbReference>
<dbReference type="HOGENOM" id="CLU_001681_1_1_1"/>
<dbReference type="InParanoid" id="Q852M2"/>
<dbReference type="OMA" id="NAGSRWK"/>
<dbReference type="OrthoDB" id="8300278at2759"/>
<dbReference type="PlantReactome" id="R-OSA-1119374">
    <property type="pathway name" value="Abscisic acid biosynthesis"/>
</dbReference>
<dbReference type="PlantReactome" id="R-OSA-1119486">
    <property type="pathway name" value="IAA biosynthesis I"/>
</dbReference>
<dbReference type="Proteomes" id="UP000000763">
    <property type="component" value="Chromosome 3"/>
</dbReference>
<dbReference type="Proteomes" id="UP000059680">
    <property type="component" value="Chromosome 3"/>
</dbReference>
<dbReference type="GO" id="GO:0051537">
    <property type="term" value="F:2 iron, 2 sulfur cluster binding"/>
    <property type="evidence" value="ECO:0007669"/>
    <property type="project" value="UniProtKB-KW"/>
</dbReference>
<dbReference type="GO" id="GO:0004031">
    <property type="term" value="F:aldehyde oxidase activity"/>
    <property type="evidence" value="ECO:0007669"/>
    <property type="project" value="UniProtKB-EC"/>
</dbReference>
<dbReference type="GO" id="GO:0071949">
    <property type="term" value="F:FAD binding"/>
    <property type="evidence" value="ECO:0007669"/>
    <property type="project" value="InterPro"/>
</dbReference>
<dbReference type="GO" id="GO:0005506">
    <property type="term" value="F:iron ion binding"/>
    <property type="evidence" value="ECO:0007669"/>
    <property type="project" value="InterPro"/>
</dbReference>
<dbReference type="GO" id="GO:0016491">
    <property type="term" value="F:oxidoreductase activity"/>
    <property type="evidence" value="ECO:0000318"/>
    <property type="project" value="GO_Central"/>
</dbReference>
<dbReference type="GO" id="GO:0009688">
    <property type="term" value="P:abscisic acid biosynthetic process"/>
    <property type="evidence" value="ECO:0007669"/>
    <property type="project" value="UniProtKB-KW"/>
</dbReference>
<dbReference type="GO" id="GO:0009851">
    <property type="term" value="P:auxin biosynthetic process"/>
    <property type="evidence" value="ECO:0007669"/>
    <property type="project" value="UniProtKB-KW"/>
</dbReference>
<dbReference type="FunFam" id="1.10.150.120:FF:000006">
    <property type="entry name" value="Aldehyde oxidase"/>
    <property type="match status" value="1"/>
</dbReference>
<dbReference type="FunFam" id="3.30.365.10:FF:000008">
    <property type="entry name" value="Aldehyde oxidase1"/>
    <property type="match status" value="1"/>
</dbReference>
<dbReference type="FunFam" id="3.30.390.50:FF:000003">
    <property type="entry name" value="Aldehyde oxidase1"/>
    <property type="match status" value="1"/>
</dbReference>
<dbReference type="FunFam" id="3.30.365.10:FF:000001">
    <property type="entry name" value="Xanthine dehydrogenase oxidase"/>
    <property type="match status" value="1"/>
</dbReference>
<dbReference type="FunFam" id="3.10.20.30:FF:000012">
    <property type="entry name" value="Xanthine dehydrogenase/oxidase"/>
    <property type="match status" value="1"/>
</dbReference>
<dbReference type="Gene3D" id="3.10.20.30">
    <property type="match status" value="1"/>
</dbReference>
<dbReference type="Gene3D" id="3.30.465.10">
    <property type="match status" value="1"/>
</dbReference>
<dbReference type="Gene3D" id="1.10.150.120">
    <property type="entry name" value="[2Fe-2S]-binding domain"/>
    <property type="match status" value="1"/>
</dbReference>
<dbReference type="Gene3D" id="3.90.1170.50">
    <property type="entry name" value="Aldehyde oxidase/xanthine dehydrogenase, a/b hammerhead"/>
    <property type="match status" value="1"/>
</dbReference>
<dbReference type="Gene3D" id="3.30.365.10">
    <property type="entry name" value="Aldehyde oxidase/xanthine dehydrogenase, molybdopterin binding domain"/>
    <property type="match status" value="4"/>
</dbReference>
<dbReference type="Gene3D" id="3.30.390.50">
    <property type="entry name" value="CO dehydrogenase flavoprotein, C-terminal domain"/>
    <property type="match status" value="1"/>
</dbReference>
<dbReference type="InterPro" id="IPR002888">
    <property type="entry name" value="2Fe-2S-bd"/>
</dbReference>
<dbReference type="InterPro" id="IPR036884">
    <property type="entry name" value="2Fe-2S-bd_dom_sf"/>
</dbReference>
<dbReference type="InterPro" id="IPR036010">
    <property type="entry name" value="2Fe-2S_ferredoxin-like_sf"/>
</dbReference>
<dbReference type="InterPro" id="IPR001041">
    <property type="entry name" value="2Fe-2S_ferredoxin-type"/>
</dbReference>
<dbReference type="InterPro" id="IPR006058">
    <property type="entry name" value="2Fe2S_fd_BS"/>
</dbReference>
<dbReference type="InterPro" id="IPR000674">
    <property type="entry name" value="Ald_Oxase/Xan_DH_a/b"/>
</dbReference>
<dbReference type="InterPro" id="IPR036856">
    <property type="entry name" value="Ald_Oxase/Xan_DH_a/b_sf"/>
</dbReference>
<dbReference type="InterPro" id="IPR016208">
    <property type="entry name" value="Ald_Oxase/xanthine_DH-like"/>
</dbReference>
<dbReference type="InterPro" id="IPR008274">
    <property type="entry name" value="AldOxase/xan_DH_MoCoBD1"/>
</dbReference>
<dbReference type="InterPro" id="IPR046867">
    <property type="entry name" value="AldOxase/xan_DH_MoCoBD2"/>
</dbReference>
<dbReference type="InterPro" id="IPR037165">
    <property type="entry name" value="AldOxase/xan_DH_Mopterin-bd_sf"/>
</dbReference>
<dbReference type="InterPro" id="IPR012675">
    <property type="entry name" value="Beta-grasp_dom_sf"/>
</dbReference>
<dbReference type="InterPro" id="IPR005107">
    <property type="entry name" value="CO_DH_flav_C"/>
</dbReference>
<dbReference type="InterPro" id="IPR036683">
    <property type="entry name" value="CO_DH_flav_C_dom_sf"/>
</dbReference>
<dbReference type="InterPro" id="IPR016166">
    <property type="entry name" value="FAD-bd_PCMH"/>
</dbReference>
<dbReference type="InterPro" id="IPR036318">
    <property type="entry name" value="FAD-bd_PCMH-like_sf"/>
</dbReference>
<dbReference type="InterPro" id="IPR016169">
    <property type="entry name" value="FAD-bd_PCMH_sub2"/>
</dbReference>
<dbReference type="InterPro" id="IPR002346">
    <property type="entry name" value="Mopterin_DH_FAD-bd"/>
</dbReference>
<dbReference type="PANTHER" id="PTHR11908:SF92">
    <property type="entry name" value="ALDEHYDE OXIDASE 1-RELATED"/>
    <property type="match status" value="1"/>
</dbReference>
<dbReference type="PANTHER" id="PTHR11908">
    <property type="entry name" value="XANTHINE DEHYDROGENASE"/>
    <property type="match status" value="1"/>
</dbReference>
<dbReference type="Pfam" id="PF01315">
    <property type="entry name" value="Ald_Xan_dh_C"/>
    <property type="match status" value="1"/>
</dbReference>
<dbReference type="Pfam" id="PF03450">
    <property type="entry name" value="CO_deh_flav_C"/>
    <property type="match status" value="1"/>
</dbReference>
<dbReference type="Pfam" id="PF00941">
    <property type="entry name" value="FAD_binding_5"/>
    <property type="match status" value="1"/>
</dbReference>
<dbReference type="Pfam" id="PF00111">
    <property type="entry name" value="Fer2"/>
    <property type="match status" value="1"/>
</dbReference>
<dbReference type="Pfam" id="PF01799">
    <property type="entry name" value="Fer2_2"/>
    <property type="match status" value="1"/>
</dbReference>
<dbReference type="Pfam" id="PF02738">
    <property type="entry name" value="MoCoBD_1"/>
    <property type="match status" value="1"/>
</dbReference>
<dbReference type="Pfam" id="PF20256">
    <property type="entry name" value="MoCoBD_2"/>
    <property type="match status" value="1"/>
</dbReference>
<dbReference type="PIRSF" id="PIRSF000127">
    <property type="entry name" value="Xanthine_DH"/>
    <property type="match status" value="1"/>
</dbReference>
<dbReference type="SMART" id="SM01008">
    <property type="entry name" value="Ald_Xan_dh_C"/>
    <property type="match status" value="1"/>
</dbReference>
<dbReference type="SMART" id="SM01092">
    <property type="entry name" value="CO_deh_flav_C"/>
    <property type="match status" value="1"/>
</dbReference>
<dbReference type="SUPFAM" id="SSF54292">
    <property type="entry name" value="2Fe-2S ferredoxin-like"/>
    <property type="match status" value="1"/>
</dbReference>
<dbReference type="SUPFAM" id="SSF55447">
    <property type="entry name" value="CO dehydrogenase flavoprotein C-terminal domain-like"/>
    <property type="match status" value="1"/>
</dbReference>
<dbReference type="SUPFAM" id="SSF47741">
    <property type="entry name" value="CO dehydrogenase ISP C-domain like"/>
    <property type="match status" value="1"/>
</dbReference>
<dbReference type="SUPFAM" id="SSF54665">
    <property type="entry name" value="CO dehydrogenase molybdoprotein N-domain-like"/>
    <property type="match status" value="1"/>
</dbReference>
<dbReference type="SUPFAM" id="SSF56176">
    <property type="entry name" value="FAD-binding/transporter-associated domain-like"/>
    <property type="match status" value="1"/>
</dbReference>
<dbReference type="SUPFAM" id="SSF56003">
    <property type="entry name" value="Molybdenum cofactor-binding domain"/>
    <property type="match status" value="1"/>
</dbReference>
<dbReference type="PROSITE" id="PS00197">
    <property type="entry name" value="2FE2S_FER_1"/>
    <property type="match status" value="1"/>
</dbReference>
<dbReference type="PROSITE" id="PS51085">
    <property type="entry name" value="2FE2S_FER_2"/>
    <property type="match status" value="1"/>
</dbReference>
<dbReference type="PROSITE" id="PS51387">
    <property type="entry name" value="FAD_PCMH"/>
    <property type="match status" value="1"/>
</dbReference>
<comment type="catalytic activity">
    <reaction>
        <text>an aldehyde + O2 + H2O = a carboxylate + H2O2 + H(+)</text>
        <dbReference type="Rhea" id="RHEA:16829"/>
        <dbReference type="ChEBI" id="CHEBI:15377"/>
        <dbReference type="ChEBI" id="CHEBI:15378"/>
        <dbReference type="ChEBI" id="CHEBI:15379"/>
        <dbReference type="ChEBI" id="CHEBI:16240"/>
        <dbReference type="ChEBI" id="CHEBI:17478"/>
        <dbReference type="ChEBI" id="CHEBI:29067"/>
        <dbReference type="EC" id="1.2.3.1"/>
    </reaction>
</comment>
<comment type="cofactor">
    <cofactor evidence="1">
        <name>[2Fe-2S] cluster</name>
        <dbReference type="ChEBI" id="CHEBI:190135"/>
    </cofactor>
    <text evidence="1">Binds 2 [2Fe-2S] clusters.</text>
</comment>
<comment type="cofactor">
    <cofactor evidence="1">
        <name>FAD</name>
        <dbReference type="ChEBI" id="CHEBI:57692"/>
    </cofactor>
</comment>
<comment type="cofactor">
    <cofactor evidence="1">
        <name>Mo-molybdopterin</name>
        <dbReference type="ChEBI" id="CHEBI:71302"/>
    </cofactor>
    <text evidence="1">Binds 1 Mo-molybdopterin (Mo-MPT) cofactor per subunit.</text>
</comment>
<comment type="subunit">
    <text evidence="1">Aldehyde oxidases (AO) are homodimers and heterodimers of AO subunits.</text>
</comment>
<comment type="similarity">
    <text evidence="5">Belongs to the xanthine dehydrogenase family.</text>
</comment>